<feature type="chain" id="PRO_1000194497" description="Ion-translocating oxidoreductase complex subunit B">
    <location>
        <begin position="1"/>
        <end position="192"/>
    </location>
</feature>
<feature type="domain" description="4Fe-4S" evidence="1">
    <location>
        <begin position="32"/>
        <end position="91"/>
    </location>
</feature>
<feature type="domain" description="4Fe-4S ferredoxin-type 1" evidence="1">
    <location>
        <begin position="108"/>
        <end position="137"/>
    </location>
</feature>
<feature type="domain" description="4Fe-4S ferredoxin-type 2" evidence="1">
    <location>
        <begin position="138"/>
        <end position="167"/>
    </location>
</feature>
<feature type="region of interest" description="Hydrophobic" evidence="1">
    <location>
        <begin position="1"/>
        <end position="26"/>
    </location>
</feature>
<feature type="binding site" evidence="1">
    <location>
        <position position="49"/>
    </location>
    <ligand>
        <name>[4Fe-4S] cluster</name>
        <dbReference type="ChEBI" id="CHEBI:49883"/>
        <label>1</label>
    </ligand>
</feature>
<feature type="binding site" evidence="1">
    <location>
        <position position="52"/>
    </location>
    <ligand>
        <name>[4Fe-4S] cluster</name>
        <dbReference type="ChEBI" id="CHEBI:49883"/>
        <label>1</label>
    </ligand>
</feature>
<feature type="binding site" evidence="1">
    <location>
        <position position="57"/>
    </location>
    <ligand>
        <name>[4Fe-4S] cluster</name>
        <dbReference type="ChEBI" id="CHEBI:49883"/>
        <label>1</label>
    </ligand>
</feature>
<feature type="binding site" evidence="1">
    <location>
        <position position="74"/>
    </location>
    <ligand>
        <name>[4Fe-4S] cluster</name>
        <dbReference type="ChEBI" id="CHEBI:49883"/>
        <label>1</label>
    </ligand>
</feature>
<feature type="binding site" evidence="1">
    <location>
        <position position="117"/>
    </location>
    <ligand>
        <name>[4Fe-4S] cluster</name>
        <dbReference type="ChEBI" id="CHEBI:49883"/>
        <label>2</label>
    </ligand>
</feature>
<feature type="binding site" evidence="1">
    <location>
        <position position="120"/>
    </location>
    <ligand>
        <name>[4Fe-4S] cluster</name>
        <dbReference type="ChEBI" id="CHEBI:49883"/>
        <label>2</label>
    </ligand>
</feature>
<feature type="binding site" evidence="1">
    <location>
        <position position="123"/>
    </location>
    <ligand>
        <name>[4Fe-4S] cluster</name>
        <dbReference type="ChEBI" id="CHEBI:49883"/>
        <label>2</label>
    </ligand>
</feature>
<feature type="binding site" evidence="1">
    <location>
        <position position="127"/>
    </location>
    <ligand>
        <name>[4Fe-4S] cluster</name>
        <dbReference type="ChEBI" id="CHEBI:49883"/>
        <label>3</label>
    </ligand>
</feature>
<feature type="binding site" evidence="1">
    <location>
        <position position="147"/>
    </location>
    <ligand>
        <name>[4Fe-4S] cluster</name>
        <dbReference type="ChEBI" id="CHEBI:49883"/>
        <label>3</label>
    </ligand>
</feature>
<feature type="binding site" evidence="1">
    <location>
        <position position="150"/>
    </location>
    <ligand>
        <name>[4Fe-4S] cluster</name>
        <dbReference type="ChEBI" id="CHEBI:49883"/>
        <label>3</label>
    </ligand>
</feature>
<feature type="binding site" evidence="1">
    <location>
        <position position="153"/>
    </location>
    <ligand>
        <name>[4Fe-4S] cluster</name>
        <dbReference type="ChEBI" id="CHEBI:49883"/>
        <label>3</label>
    </ligand>
</feature>
<feature type="binding site" evidence="1">
    <location>
        <position position="157"/>
    </location>
    <ligand>
        <name>[4Fe-4S] cluster</name>
        <dbReference type="ChEBI" id="CHEBI:49883"/>
        <label>2</label>
    </ligand>
</feature>
<evidence type="ECO:0000255" key="1">
    <source>
        <dbReference type="HAMAP-Rule" id="MF_00463"/>
    </source>
</evidence>
<comment type="function">
    <text evidence="1">Part of a membrane-bound complex that couples electron transfer with translocation of ions across the membrane. Required to maintain the reduced state of SoxR.</text>
</comment>
<comment type="cofactor">
    <cofactor evidence="1">
        <name>[4Fe-4S] cluster</name>
        <dbReference type="ChEBI" id="CHEBI:49883"/>
    </cofactor>
    <text evidence="1">Binds 3 [4Fe-4S] clusters.</text>
</comment>
<comment type="subunit">
    <text evidence="1">The complex is composed of six subunits: RsxA, RsxB, RsxC, RsxD, RsxE and RsxG.</text>
</comment>
<comment type="subcellular location">
    <subcellularLocation>
        <location evidence="1">Cell inner membrane</location>
    </subcellularLocation>
</comment>
<comment type="similarity">
    <text evidence="1">Belongs to the 4Fe4S bacterial-type ferredoxin family. RnfB subfamily.</text>
</comment>
<reference key="1">
    <citation type="journal article" date="2009" name="BMC Genomics">
        <title>Pseudogene accumulation in the evolutionary histories of Salmonella enterica serovars Paratyphi A and Typhi.</title>
        <authorList>
            <person name="Holt K.E."/>
            <person name="Thomson N.R."/>
            <person name="Wain J."/>
            <person name="Langridge G.C."/>
            <person name="Hasan R."/>
            <person name="Bhutta Z.A."/>
            <person name="Quail M.A."/>
            <person name="Norbertczak H."/>
            <person name="Walker D."/>
            <person name="Simmonds M."/>
            <person name="White B."/>
            <person name="Bason N."/>
            <person name="Mungall K."/>
            <person name="Dougan G."/>
            <person name="Parkhill J."/>
        </authorList>
    </citation>
    <scope>NUCLEOTIDE SEQUENCE [LARGE SCALE GENOMIC DNA]</scope>
    <source>
        <strain>AKU_12601</strain>
    </source>
</reference>
<sequence>MNTIWIAVGALTLLGLVFGAILGYASRRFAVEDDPVVEKIDAILPQSQCGQCGYPGCRPYAEAVGLQGEKINRCAPGGEAVMLKMAELLNVEPQPCDGEEQQAAPVRMLAVIDENNCIGCTKCIQACPVDAIVGATRAMHTVMSDLCTGCNLCVDPCPTHCIELRPVNETPDSWKWDLNTIPVRIIPVEQHA</sequence>
<protein>
    <recommendedName>
        <fullName evidence="1">Ion-translocating oxidoreductase complex subunit B</fullName>
        <ecNumber evidence="1">7.-.-.-</ecNumber>
    </recommendedName>
    <alternativeName>
        <fullName evidence="1">Rsx electron transport complex subunit B</fullName>
    </alternativeName>
</protein>
<keyword id="KW-0004">4Fe-4S</keyword>
<keyword id="KW-0997">Cell inner membrane</keyword>
<keyword id="KW-1003">Cell membrane</keyword>
<keyword id="KW-0249">Electron transport</keyword>
<keyword id="KW-0408">Iron</keyword>
<keyword id="KW-0411">Iron-sulfur</keyword>
<keyword id="KW-0472">Membrane</keyword>
<keyword id="KW-0479">Metal-binding</keyword>
<keyword id="KW-0677">Repeat</keyword>
<keyword id="KW-1278">Translocase</keyword>
<keyword id="KW-0813">Transport</keyword>
<gene>
    <name evidence="1" type="primary">rsxB</name>
    <name type="ordered locus">SSPA1295</name>
</gene>
<accession>B5BKB1</accession>
<name>RSXB_SALPK</name>
<dbReference type="EC" id="7.-.-.-" evidence="1"/>
<dbReference type="EMBL" id="FM200053">
    <property type="protein sequence ID" value="CAR59470.1"/>
    <property type="molecule type" value="Genomic_DNA"/>
</dbReference>
<dbReference type="RefSeq" id="WP_001092600.1">
    <property type="nucleotide sequence ID" value="NC_011147.1"/>
</dbReference>
<dbReference type="SMR" id="B5BKB1"/>
<dbReference type="KEGG" id="sek:SSPA1295"/>
<dbReference type="HOGENOM" id="CLU_063448_2_0_6"/>
<dbReference type="Proteomes" id="UP000001869">
    <property type="component" value="Chromosome"/>
</dbReference>
<dbReference type="GO" id="GO:0005886">
    <property type="term" value="C:plasma membrane"/>
    <property type="evidence" value="ECO:0007669"/>
    <property type="project" value="UniProtKB-SubCell"/>
</dbReference>
<dbReference type="GO" id="GO:0051539">
    <property type="term" value="F:4 iron, 4 sulfur cluster binding"/>
    <property type="evidence" value="ECO:0007669"/>
    <property type="project" value="UniProtKB-UniRule"/>
</dbReference>
<dbReference type="GO" id="GO:0009055">
    <property type="term" value="F:electron transfer activity"/>
    <property type="evidence" value="ECO:0007669"/>
    <property type="project" value="InterPro"/>
</dbReference>
<dbReference type="GO" id="GO:0046872">
    <property type="term" value="F:metal ion binding"/>
    <property type="evidence" value="ECO:0007669"/>
    <property type="project" value="UniProtKB-KW"/>
</dbReference>
<dbReference type="GO" id="GO:0022900">
    <property type="term" value="P:electron transport chain"/>
    <property type="evidence" value="ECO:0007669"/>
    <property type="project" value="UniProtKB-UniRule"/>
</dbReference>
<dbReference type="FunFam" id="1.10.15.40:FF:000001">
    <property type="entry name" value="Ion-translocating oxidoreductase complex subunit B"/>
    <property type="match status" value="1"/>
</dbReference>
<dbReference type="Gene3D" id="3.30.70.20">
    <property type="match status" value="1"/>
</dbReference>
<dbReference type="Gene3D" id="1.10.15.40">
    <property type="entry name" value="Electron transport complex subunit B, putative Fe-S cluster"/>
    <property type="match status" value="1"/>
</dbReference>
<dbReference type="HAMAP" id="MF_00463">
    <property type="entry name" value="RsxB_RnfB"/>
    <property type="match status" value="1"/>
</dbReference>
<dbReference type="InterPro" id="IPR007202">
    <property type="entry name" value="4Fe-4S_dom"/>
</dbReference>
<dbReference type="InterPro" id="IPR017896">
    <property type="entry name" value="4Fe4S_Fe-S-bd"/>
</dbReference>
<dbReference type="InterPro" id="IPR017900">
    <property type="entry name" value="4Fe4S_Fe_S_CS"/>
</dbReference>
<dbReference type="InterPro" id="IPR050395">
    <property type="entry name" value="4Fe4S_Ferredoxin_RnfB"/>
</dbReference>
<dbReference type="InterPro" id="IPR010207">
    <property type="entry name" value="Elect_transpt_cplx_RnfB/RsxB"/>
</dbReference>
<dbReference type="InterPro" id="IPR016463">
    <property type="entry name" value="RnfB/RsxB_Proteobac"/>
</dbReference>
<dbReference type="NCBIfam" id="NF003475">
    <property type="entry name" value="PRK05113.1"/>
    <property type="match status" value="1"/>
</dbReference>
<dbReference type="NCBIfam" id="TIGR01944">
    <property type="entry name" value="rnfB"/>
    <property type="match status" value="1"/>
</dbReference>
<dbReference type="PANTHER" id="PTHR43560">
    <property type="entry name" value="ION-TRANSLOCATING OXIDOREDUCTASE COMPLEX SUBUNIT B"/>
    <property type="match status" value="1"/>
</dbReference>
<dbReference type="PANTHER" id="PTHR43560:SF1">
    <property type="entry name" value="ION-TRANSLOCATING OXIDOREDUCTASE COMPLEX SUBUNIT B"/>
    <property type="match status" value="1"/>
</dbReference>
<dbReference type="Pfam" id="PF14697">
    <property type="entry name" value="Fer4_21"/>
    <property type="match status" value="1"/>
</dbReference>
<dbReference type="Pfam" id="PF04060">
    <property type="entry name" value="FeS"/>
    <property type="match status" value="1"/>
</dbReference>
<dbReference type="PIRSF" id="PIRSF005784">
    <property type="entry name" value="Elect_transpt_RnfB"/>
    <property type="match status" value="1"/>
</dbReference>
<dbReference type="SUPFAM" id="SSF54862">
    <property type="entry name" value="4Fe-4S ferredoxins"/>
    <property type="match status" value="1"/>
</dbReference>
<dbReference type="PROSITE" id="PS51656">
    <property type="entry name" value="4FE4S"/>
    <property type="match status" value="1"/>
</dbReference>
<dbReference type="PROSITE" id="PS00198">
    <property type="entry name" value="4FE4S_FER_1"/>
    <property type="match status" value="2"/>
</dbReference>
<dbReference type="PROSITE" id="PS51379">
    <property type="entry name" value="4FE4S_FER_2"/>
    <property type="match status" value="2"/>
</dbReference>
<proteinExistence type="inferred from homology"/>
<organism>
    <name type="scientific">Salmonella paratyphi A (strain AKU_12601)</name>
    <dbReference type="NCBI Taxonomy" id="554290"/>
    <lineage>
        <taxon>Bacteria</taxon>
        <taxon>Pseudomonadati</taxon>
        <taxon>Pseudomonadota</taxon>
        <taxon>Gammaproteobacteria</taxon>
        <taxon>Enterobacterales</taxon>
        <taxon>Enterobacteriaceae</taxon>
        <taxon>Salmonella</taxon>
    </lineage>
</organism>